<name>MRAY_CHLT3</name>
<dbReference type="EC" id="2.7.8.13" evidence="1"/>
<dbReference type="EMBL" id="CP001100">
    <property type="protein sequence ID" value="ACF13298.1"/>
    <property type="molecule type" value="Genomic_DNA"/>
</dbReference>
<dbReference type="RefSeq" id="WP_012499382.1">
    <property type="nucleotide sequence ID" value="NC_011026.1"/>
</dbReference>
<dbReference type="SMR" id="B3QWT4"/>
<dbReference type="STRING" id="517418.Ctha_0830"/>
<dbReference type="KEGG" id="cts:Ctha_0830"/>
<dbReference type="eggNOG" id="COG0472">
    <property type="taxonomic scope" value="Bacteria"/>
</dbReference>
<dbReference type="HOGENOM" id="CLU_023982_0_0_10"/>
<dbReference type="OrthoDB" id="9805475at2"/>
<dbReference type="UniPathway" id="UPA00219"/>
<dbReference type="Proteomes" id="UP000001208">
    <property type="component" value="Chromosome"/>
</dbReference>
<dbReference type="GO" id="GO:0005886">
    <property type="term" value="C:plasma membrane"/>
    <property type="evidence" value="ECO:0007669"/>
    <property type="project" value="UniProtKB-SubCell"/>
</dbReference>
<dbReference type="GO" id="GO:0046872">
    <property type="term" value="F:metal ion binding"/>
    <property type="evidence" value="ECO:0007669"/>
    <property type="project" value="UniProtKB-KW"/>
</dbReference>
<dbReference type="GO" id="GO:0008963">
    <property type="term" value="F:phospho-N-acetylmuramoyl-pentapeptide-transferase activity"/>
    <property type="evidence" value="ECO:0007669"/>
    <property type="project" value="UniProtKB-UniRule"/>
</dbReference>
<dbReference type="GO" id="GO:0051992">
    <property type="term" value="F:UDP-N-acetylmuramoyl-L-alanyl-D-glutamyl-meso-2,6-diaminopimelyl-D-alanyl-D-alanine:undecaprenyl-phosphate transferase activity"/>
    <property type="evidence" value="ECO:0007669"/>
    <property type="project" value="RHEA"/>
</dbReference>
<dbReference type="GO" id="GO:0051301">
    <property type="term" value="P:cell division"/>
    <property type="evidence" value="ECO:0007669"/>
    <property type="project" value="UniProtKB-KW"/>
</dbReference>
<dbReference type="GO" id="GO:0071555">
    <property type="term" value="P:cell wall organization"/>
    <property type="evidence" value="ECO:0007669"/>
    <property type="project" value="UniProtKB-KW"/>
</dbReference>
<dbReference type="GO" id="GO:0009252">
    <property type="term" value="P:peptidoglycan biosynthetic process"/>
    <property type="evidence" value="ECO:0007669"/>
    <property type="project" value="UniProtKB-UniRule"/>
</dbReference>
<dbReference type="GO" id="GO:0008360">
    <property type="term" value="P:regulation of cell shape"/>
    <property type="evidence" value="ECO:0007669"/>
    <property type="project" value="UniProtKB-KW"/>
</dbReference>
<dbReference type="CDD" id="cd06852">
    <property type="entry name" value="GT_MraY"/>
    <property type="match status" value="1"/>
</dbReference>
<dbReference type="HAMAP" id="MF_00038">
    <property type="entry name" value="MraY"/>
    <property type="match status" value="1"/>
</dbReference>
<dbReference type="InterPro" id="IPR000715">
    <property type="entry name" value="Glycosyl_transferase_4"/>
</dbReference>
<dbReference type="InterPro" id="IPR003524">
    <property type="entry name" value="PNAcMuramoyl-5peptid_Trfase"/>
</dbReference>
<dbReference type="InterPro" id="IPR018480">
    <property type="entry name" value="PNAcMuramoyl-5peptid_Trfase_CS"/>
</dbReference>
<dbReference type="NCBIfam" id="TIGR00445">
    <property type="entry name" value="mraY"/>
    <property type="match status" value="1"/>
</dbReference>
<dbReference type="PANTHER" id="PTHR22926">
    <property type="entry name" value="PHOSPHO-N-ACETYLMURAMOYL-PENTAPEPTIDE-TRANSFERASE"/>
    <property type="match status" value="1"/>
</dbReference>
<dbReference type="PANTHER" id="PTHR22926:SF5">
    <property type="entry name" value="PHOSPHO-N-ACETYLMURAMOYL-PENTAPEPTIDE-TRANSFERASE HOMOLOG"/>
    <property type="match status" value="1"/>
</dbReference>
<dbReference type="Pfam" id="PF00953">
    <property type="entry name" value="Glycos_transf_4"/>
    <property type="match status" value="1"/>
</dbReference>
<dbReference type="PROSITE" id="PS01347">
    <property type="entry name" value="MRAY_1"/>
    <property type="match status" value="1"/>
</dbReference>
<dbReference type="PROSITE" id="PS01348">
    <property type="entry name" value="MRAY_2"/>
    <property type="match status" value="1"/>
</dbReference>
<evidence type="ECO:0000255" key="1">
    <source>
        <dbReference type="HAMAP-Rule" id="MF_00038"/>
    </source>
</evidence>
<reference key="1">
    <citation type="submission" date="2008-06" db="EMBL/GenBank/DDBJ databases">
        <title>Complete sequence of Chloroherpeton thalassium ATCC 35110.</title>
        <authorList>
            <consortium name="US DOE Joint Genome Institute"/>
            <person name="Lucas S."/>
            <person name="Copeland A."/>
            <person name="Lapidus A."/>
            <person name="Glavina del Rio T."/>
            <person name="Dalin E."/>
            <person name="Tice H."/>
            <person name="Bruce D."/>
            <person name="Goodwin L."/>
            <person name="Pitluck S."/>
            <person name="Schmutz J."/>
            <person name="Larimer F."/>
            <person name="Land M."/>
            <person name="Hauser L."/>
            <person name="Kyrpides N."/>
            <person name="Mikhailova N."/>
            <person name="Liu Z."/>
            <person name="Li T."/>
            <person name="Zhao F."/>
            <person name="Overmann J."/>
            <person name="Bryant D.A."/>
            <person name="Richardson P."/>
        </authorList>
    </citation>
    <scope>NUCLEOTIDE SEQUENCE [LARGE SCALE GENOMIC DNA]</scope>
    <source>
        <strain>ATCC 35110 / GB-78</strain>
    </source>
</reference>
<proteinExistence type="inferred from homology"/>
<comment type="function">
    <text evidence="1">Catalyzes the initial step of the lipid cycle reactions in the biosynthesis of the cell wall peptidoglycan: transfers peptidoglycan precursor phospho-MurNAc-pentapeptide from UDP-MurNAc-pentapeptide onto the lipid carrier undecaprenyl phosphate, yielding undecaprenyl-pyrophosphoryl-MurNAc-pentapeptide, known as lipid I.</text>
</comment>
<comment type="catalytic activity">
    <reaction evidence="1">
        <text>UDP-N-acetyl-alpha-D-muramoyl-L-alanyl-gamma-D-glutamyl-meso-2,6-diaminopimeloyl-D-alanyl-D-alanine + di-trans,octa-cis-undecaprenyl phosphate = di-trans,octa-cis-undecaprenyl diphospho-N-acetyl-alpha-D-muramoyl-L-alanyl-D-glutamyl-meso-2,6-diaminopimeloyl-D-alanyl-D-alanine + UMP</text>
        <dbReference type="Rhea" id="RHEA:28386"/>
        <dbReference type="ChEBI" id="CHEBI:57865"/>
        <dbReference type="ChEBI" id="CHEBI:60392"/>
        <dbReference type="ChEBI" id="CHEBI:61386"/>
        <dbReference type="ChEBI" id="CHEBI:61387"/>
        <dbReference type="EC" id="2.7.8.13"/>
    </reaction>
</comment>
<comment type="cofactor">
    <cofactor evidence="1">
        <name>Mg(2+)</name>
        <dbReference type="ChEBI" id="CHEBI:18420"/>
    </cofactor>
</comment>
<comment type="pathway">
    <text evidence="1">Cell wall biogenesis; peptidoglycan biosynthesis.</text>
</comment>
<comment type="subcellular location">
    <subcellularLocation>
        <location evidence="1">Cell inner membrane</location>
        <topology evidence="1">Multi-pass membrane protein</topology>
    </subcellularLocation>
</comment>
<comment type="similarity">
    <text evidence="1">Belongs to the glycosyltransferase 4 family. MraY subfamily.</text>
</comment>
<feature type="chain" id="PRO_1000090610" description="Phospho-N-acetylmuramoyl-pentapeptide-transferase">
    <location>
        <begin position="1"/>
        <end position="368"/>
    </location>
</feature>
<feature type="transmembrane region" description="Helical" evidence="1">
    <location>
        <begin position="23"/>
        <end position="43"/>
    </location>
</feature>
<feature type="transmembrane region" description="Helical" evidence="1">
    <location>
        <begin position="72"/>
        <end position="92"/>
    </location>
</feature>
<feature type="transmembrane region" description="Helical" evidence="1">
    <location>
        <begin position="94"/>
        <end position="114"/>
    </location>
</feature>
<feature type="transmembrane region" description="Helical" evidence="1">
    <location>
        <begin position="139"/>
        <end position="159"/>
    </location>
</feature>
<feature type="transmembrane region" description="Helical" evidence="1">
    <location>
        <begin position="170"/>
        <end position="190"/>
    </location>
</feature>
<feature type="transmembrane region" description="Helical" evidence="1">
    <location>
        <begin position="201"/>
        <end position="221"/>
    </location>
</feature>
<feature type="transmembrane region" description="Helical" evidence="1">
    <location>
        <begin position="238"/>
        <end position="258"/>
    </location>
</feature>
<feature type="transmembrane region" description="Helical" evidence="1">
    <location>
        <begin position="265"/>
        <end position="286"/>
    </location>
</feature>
<feature type="transmembrane region" description="Helical" evidence="1">
    <location>
        <begin position="345"/>
        <end position="365"/>
    </location>
</feature>
<gene>
    <name evidence="1" type="primary">mraY</name>
    <name type="ordered locus">Ctha_0830</name>
</gene>
<organism>
    <name type="scientific">Chloroherpeton thalassium (strain ATCC 35110 / GB-78)</name>
    <dbReference type="NCBI Taxonomy" id="517418"/>
    <lineage>
        <taxon>Bacteria</taxon>
        <taxon>Pseudomonadati</taxon>
        <taxon>Chlorobiota</taxon>
        <taxon>Chlorobiia</taxon>
        <taxon>Chlorobiales</taxon>
        <taxon>Chloroherpetonaceae</taxon>
        <taxon>Chloroherpeton</taxon>
    </lineage>
</organism>
<sequence length="368" mass="40624">MLYYLLSYVREIYDPPGLGVINYITFRAGAAAVTALIIILVFGPKIIRFLRDKVIEPIKEEAPEEHRKKVNIPTMGGLMIILAIEVSGLLWAKIAEPFVWMVLLAIIWMGAVGFVDDYRKVVLKIKGGLSGRYKIVGQVALGLIIGGYTFFDPTLSVLLSKTTVPFIKEITVDYGIWYIPLAIFIVTAVSNAVNLTDGLDGLAAGSTAISVFSLAGFAYLTGNVKFAEYLNITYIPGAGEVTILSMAIVAACIGFLWFNSNPAEVFMGDTGSLALGSAVAVIALLIKKELLLPLIAGIFFIETLSVIIQRGYFKYTKRRDGEGKRIFRMAPLHHHFQKKGWAEQKIVIRFWIIEVLLVLTSLLTLKLR</sequence>
<keyword id="KW-0131">Cell cycle</keyword>
<keyword id="KW-0132">Cell division</keyword>
<keyword id="KW-0997">Cell inner membrane</keyword>
<keyword id="KW-1003">Cell membrane</keyword>
<keyword id="KW-0133">Cell shape</keyword>
<keyword id="KW-0961">Cell wall biogenesis/degradation</keyword>
<keyword id="KW-0460">Magnesium</keyword>
<keyword id="KW-0472">Membrane</keyword>
<keyword id="KW-0479">Metal-binding</keyword>
<keyword id="KW-0573">Peptidoglycan synthesis</keyword>
<keyword id="KW-1185">Reference proteome</keyword>
<keyword id="KW-0808">Transferase</keyword>
<keyword id="KW-0812">Transmembrane</keyword>
<keyword id="KW-1133">Transmembrane helix</keyword>
<accession>B3QWT4</accession>
<protein>
    <recommendedName>
        <fullName evidence="1">Phospho-N-acetylmuramoyl-pentapeptide-transferase</fullName>
        <ecNumber evidence="1">2.7.8.13</ecNumber>
    </recommendedName>
    <alternativeName>
        <fullName evidence="1">UDP-MurNAc-pentapeptide phosphotransferase</fullName>
    </alternativeName>
</protein>